<accession>Q5F3L3</accession>
<reference key="1">
    <citation type="journal article" date="2005" name="Genome Biol.">
        <title>Full-length cDNAs from chicken bursal lymphocytes to facilitate gene function analysis.</title>
        <authorList>
            <person name="Caldwell R.B."/>
            <person name="Kierzek A.M."/>
            <person name="Arakawa H."/>
            <person name="Bezzubov Y."/>
            <person name="Zaim J."/>
            <person name="Fiedler P."/>
            <person name="Kutter S."/>
            <person name="Blagodatski A."/>
            <person name="Kostovska D."/>
            <person name="Koter M."/>
            <person name="Plachy J."/>
            <person name="Carninci P."/>
            <person name="Hayashizaki Y."/>
            <person name="Buerstedde J.-M."/>
        </authorList>
    </citation>
    <scope>NUCLEOTIDE SEQUENCE [LARGE SCALE MRNA]</scope>
    <source>
        <strain>CB</strain>
        <tissue>Bursa of Fabricius</tissue>
    </source>
</reference>
<sequence length="623" mass="67647">MATVLSRALKLPGKKSPDLGEYDPLTQADSDESEDDLVLNIQKNGGVKNGKSPPEEMQDPDSDVEVGMTKQHTSERAPEGYPAEAAGSLEQKAAPSLMPYLRTAVFLLTVVISMILVLVCAFLIPCPPRDLHNTWNHNLGQGAGGVLSPLELCDVNGDGLPDILIVFTALMNASVMGVSTPSVTVVALSGMNGSTLWSIQLPEETRSVQCKGLSLGSPAEPICLVTGTAKFLSLLSASTGKTIWTLNSIHLSDGILAAPAATLPDVDGDGIRDIVVLALKETQPDVFFVLVSGKTGAALGGPVKYNVIGEGKVIGPQVHITSRGAIYILFGFGNVQAIALRDIFTQARNRDSFPMMLHQEEPEWEKRRSVNLSELIDIYSGGVDFLQTIKAPDTNCSNLLITTKEGLILLQGQDLEPRWTLEIQNISSQPVLGYFSADQTLDFMLQAQTGNGKKKVVVVDGKSGLPVWKQELPWQKQQLDALSVMTLDKKSVFLFWADEAQPVLHSLHPGPRSERPGLHHLYLLHPVFPTVLLDLTNATDKVIASAVGINDLQKDAFHITVTTTATSEKQPGFLSVSKLGLKWAMMTQGRMVWLKDTTTPKISRGEVRRFLARLKFVDFPHKL</sequence>
<proteinExistence type="evidence at transcript level"/>
<dbReference type="EMBL" id="AJ851637">
    <property type="protein sequence ID" value="CAH65271.1"/>
    <property type="molecule type" value="mRNA"/>
</dbReference>
<dbReference type="RefSeq" id="NP_001012830.1">
    <property type="nucleotide sequence ID" value="NM_001012812.3"/>
</dbReference>
<dbReference type="FunCoup" id="Q5F3L3">
    <property type="interactions" value="86"/>
</dbReference>
<dbReference type="STRING" id="9031.ENSGALP00000049117"/>
<dbReference type="PaxDb" id="9031-ENSGALP00000019233"/>
<dbReference type="Ensembl" id="ENSGALT00010026414.1">
    <property type="protein sequence ID" value="ENSGALP00010015028.1"/>
    <property type="gene ID" value="ENSGALG00010011027.1"/>
</dbReference>
<dbReference type="GeneID" id="417963"/>
<dbReference type="KEGG" id="gga:417963"/>
<dbReference type="CTD" id="57613"/>
<dbReference type="VEuPathDB" id="HostDB:geneid_417963"/>
<dbReference type="eggNOG" id="ENOG502QVNA">
    <property type="taxonomic scope" value="Eukaryota"/>
</dbReference>
<dbReference type="GeneTree" id="ENSGT00530000063694"/>
<dbReference type="InParanoid" id="Q5F3L3"/>
<dbReference type="OMA" id="FFQHSAN"/>
<dbReference type="OrthoDB" id="9941159at2759"/>
<dbReference type="PhylomeDB" id="Q5F3L3"/>
<dbReference type="PRO" id="PR:Q5F3L3"/>
<dbReference type="Proteomes" id="UP000000539">
    <property type="component" value="Chromosome 1"/>
</dbReference>
<dbReference type="GO" id="GO:0005794">
    <property type="term" value="C:Golgi apparatus"/>
    <property type="evidence" value="ECO:0007669"/>
    <property type="project" value="UniProtKB-KW"/>
</dbReference>
<dbReference type="GO" id="GO:0016020">
    <property type="term" value="C:membrane"/>
    <property type="evidence" value="ECO:0007669"/>
    <property type="project" value="UniProtKB-SubCell"/>
</dbReference>
<dbReference type="GO" id="GO:0005815">
    <property type="term" value="C:microtubule organizing center"/>
    <property type="evidence" value="ECO:0007669"/>
    <property type="project" value="UniProtKB-SubCell"/>
</dbReference>
<dbReference type="Gene3D" id="2.130.10.10">
    <property type="entry name" value="YVTN repeat-like/Quinoprotein amine dehydrogenase"/>
    <property type="match status" value="1"/>
</dbReference>
<dbReference type="InterPro" id="IPR045232">
    <property type="entry name" value="FAM234"/>
</dbReference>
<dbReference type="InterPro" id="IPR055409">
    <property type="entry name" value="FAM234A_B_beta-prop"/>
</dbReference>
<dbReference type="InterPro" id="IPR011047">
    <property type="entry name" value="Quinoprotein_ADH-like_sf"/>
</dbReference>
<dbReference type="InterPro" id="IPR015943">
    <property type="entry name" value="WD40/YVTN_repeat-like_dom_sf"/>
</dbReference>
<dbReference type="PANTHER" id="PTHR21419">
    <property type="match status" value="1"/>
</dbReference>
<dbReference type="PANTHER" id="PTHR21419:SF25">
    <property type="entry name" value="PROTEIN FAM234B"/>
    <property type="match status" value="1"/>
</dbReference>
<dbReference type="Pfam" id="PF23727">
    <property type="entry name" value="Beta-prop_FAM234A_B"/>
    <property type="match status" value="1"/>
</dbReference>
<dbReference type="SUPFAM" id="SSF50998">
    <property type="entry name" value="Quinoprotein alcohol dehydrogenase-like"/>
    <property type="match status" value="1"/>
</dbReference>
<evidence type="ECO:0000250" key="1">
    <source>
        <dbReference type="UniProtKB" id="D3ZWJ9"/>
    </source>
</evidence>
<evidence type="ECO:0000255" key="2"/>
<evidence type="ECO:0000256" key="3">
    <source>
        <dbReference type="SAM" id="MobiDB-lite"/>
    </source>
</evidence>
<evidence type="ECO:0000305" key="4"/>
<keyword id="KW-0963">Cytoplasm</keyword>
<keyword id="KW-0206">Cytoskeleton</keyword>
<keyword id="KW-0333">Golgi apparatus</keyword>
<keyword id="KW-0472">Membrane</keyword>
<keyword id="KW-1185">Reference proteome</keyword>
<keyword id="KW-0812">Transmembrane</keyword>
<keyword id="KW-1133">Transmembrane helix</keyword>
<protein>
    <recommendedName>
        <fullName>Protein FAM234B</fullName>
    </recommendedName>
</protein>
<name>F234B_CHICK</name>
<comment type="subcellular location">
    <subcellularLocation>
        <location evidence="2">Membrane</location>
        <topology evidence="2">Single-pass membrane protein</topology>
    </subcellularLocation>
    <subcellularLocation>
        <location evidence="1">Golgi outpost</location>
    </subcellularLocation>
    <subcellularLocation>
        <location evidence="1">Cytoplasm</location>
        <location evidence="1">Cytoskeleton</location>
        <location evidence="1">Microtubule organizing center</location>
    </subcellularLocation>
    <text evidence="1">Localizes to the postsynaptic Golgi apparatus region, also named Golgi outpost, which shapes dendrite morphology by functioning as sites of acentrosomal microtubule nucleation.</text>
</comment>
<comment type="similarity">
    <text evidence="4">Belongs to the FAM234 family.</text>
</comment>
<gene>
    <name type="primary">FAM234B</name>
    <name type="synonym">KIAA1467</name>
    <name type="ORF">RCJMB04_14d19</name>
</gene>
<organism>
    <name type="scientific">Gallus gallus</name>
    <name type="common">Chicken</name>
    <dbReference type="NCBI Taxonomy" id="9031"/>
    <lineage>
        <taxon>Eukaryota</taxon>
        <taxon>Metazoa</taxon>
        <taxon>Chordata</taxon>
        <taxon>Craniata</taxon>
        <taxon>Vertebrata</taxon>
        <taxon>Euteleostomi</taxon>
        <taxon>Archelosauria</taxon>
        <taxon>Archosauria</taxon>
        <taxon>Dinosauria</taxon>
        <taxon>Saurischia</taxon>
        <taxon>Theropoda</taxon>
        <taxon>Coelurosauria</taxon>
        <taxon>Aves</taxon>
        <taxon>Neognathae</taxon>
        <taxon>Galloanserae</taxon>
        <taxon>Galliformes</taxon>
        <taxon>Phasianidae</taxon>
        <taxon>Phasianinae</taxon>
        <taxon>Gallus</taxon>
    </lineage>
</organism>
<feature type="chain" id="PRO_0000288915" description="Protein FAM234B">
    <location>
        <begin position="1"/>
        <end position="623"/>
    </location>
</feature>
<feature type="transmembrane region" description="Helical" evidence="2">
    <location>
        <begin position="104"/>
        <end position="124"/>
    </location>
</feature>
<feature type="region of interest" description="Disordered" evidence="3">
    <location>
        <begin position="1"/>
        <end position="82"/>
    </location>
</feature>